<feature type="chain" id="PRO_1000215488" description="Phosphoglucosamine mutase">
    <location>
        <begin position="1"/>
        <end position="445"/>
    </location>
</feature>
<feature type="active site" description="Phosphoserine intermediate" evidence="1">
    <location>
        <position position="102"/>
    </location>
</feature>
<feature type="binding site" description="via phosphate group" evidence="1">
    <location>
        <position position="102"/>
    </location>
    <ligand>
        <name>Mg(2+)</name>
        <dbReference type="ChEBI" id="CHEBI:18420"/>
    </ligand>
</feature>
<feature type="binding site" evidence="1">
    <location>
        <position position="241"/>
    </location>
    <ligand>
        <name>Mg(2+)</name>
        <dbReference type="ChEBI" id="CHEBI:18420"/>
    </ligand>
</feature>
<feature type="binding site" evidence="1">
    <location>
        <position position="243"/>
    </location>
    <ligand>
        <name>Mg(2+)</name>
        <dbReference type="ChEBI" id="CHEBI:18420"/>
    </ligand>
</feature>
<feature type="binding site" evidence="1">
    <location>
        <position position="245"/>
    </location>
    <ligand>
        <name>Mg(2+)</name>
        <dbReference type="ChEBI" id="CHEBI:18420"/>
    </ligand>
</feature>
<feature type="modified residue" description="Phosphoserine" evidence="1">
    <location>
        <position position="102"/>
    </location>
</feature>
<name>GLMM_ECOBW</name>
<accession>C4ZSR5</accession>
<dbReference type="EC" id="5.4.2.10" evidence="1"/>
<dbReference type="EMBL" id="CP001396">
    <property type="protein sequence ID" value="ACR64040.1"/>
    <property type="molecule type" value="Genomic_DNA"/>
</dbReference>
<dbReference type="RefSeq" id="WP_000071134.1">
    <property type="nucleotide sequence ID" value="NC_012759.1"/>
</dbReference>
<dbReference type="SMR" id="C4ZSR5"/>
<dbReference type="GeneID" id="75206032"/>
<dbReference type="KEGG" id="ebw:BWG_2878"/>
<dbReference type="HOGENOM" id="CLU_016950_7_0_6"/>
<dbReference type="GO" id="GO:0005829">
    <property type="term" value="C:cytosol"/>
    <property type="evidence" value="ECO:0007669"/>
    <property type="project" value="TreeGrafter"/>
</dbReference>
<dbReference type="GO" id="GO:0000287">
    <property type="term" value="F:magnesium ion binding"/>
    <property type="evidence" value="ECO:0007669"/>
    <property type="project" value="UniProtKB-UniRule"/>
</dbReference>
<dbReference type="GO" id="GO:0008966">
    <property type="term" value="F:phosphoglucosamine mutase activity"/>
    <property type="evidence" value="ECO:0007669"/>
    <property type="project" value="UniProtKB-UniRule"/>
</dbReference>
<dbReference type="GO" id="GO:0004615">
    <property type="term" value="F:phosphomannomutase activity"/>
    <property type="evidence" value="ECO:0007669"/>
    <property type="project" value="TreeGrafter"/>
</dbReference>
<dbReference type="GO" id="GO:0005975">
    <property type="term" value="P:carbohydrate metabolic process"/>
    <property type="evidence" value="ECO:0007669"/>
    <property type="project" value="InterPro"/>
</dbReference>
<dbReference type="GO" id="GO:0009252">
    <property type="term" value="P:peptidoglycan biosynthetic process"/>
    <property type="evidence" value="ECO:0007669"/>
    <property type="project" value="TreeGrafter"/>
</dbReference>
<dbReference type="GO" id="GO:0006048">
    <property type="term" value="P:UDP-N-acetylglucosamine biosynthetic process"/>
    <property type="evidence" value="ECO:0007669"/>
    <property type="project" value="TreeGrafter"/>
</dbReference>
<dbReference type="CDD" id="cd05802">
    <property type="entry name" value="GlmM"/>
    <property type="match status" value="1"/>
</dbReference>
<dbReference type="FunFam" id="3.30.310.50:FF:000001">
    <property type="entry name" value="Phosphoglucosamine mutase"/>
    <property type="match status" value="1"/>
</dbReference>
<dbReference type="FunFam" id="3.40.120.10:FF:000001">
    <property type="entry name" value="Phosphoglucosamine mutase"/>
    <property type="match status" value="1"/>
</dbReference>
<dbReference type="FunFam" id="3.40.120.10:FF:000002">
    <property type="entry name" value="Phosphoglucosamine mutase"/>
    <property type="match status" value="1"/>
</dbReference>
<dbReference type="Gene3D" id="3.40.120.10">
    <property type="entry name" value="Alpha-D-Glucose-1,6-Bisphosphate, subunit A, domain 3"/>
    <property type="match status" value="3"/>
</dbReference>
<dbReference type="Gene3D" id="3.30.310.50">
    <property type="entry name" value="Alpha-D-phosphohexomutase, C-terminal domain"/>
    <property type="match status" value="1"/>
</dbReference>
<dbReference type="HAMAP" id="MF_01554_B">
    <property type="entry name" value="GlmM_B"/>
    <property type="match status" value="1"/>
</dbReference>
<dbReference type="InterPro" id="IPR005844">
    <property type="entry name" value="A-D-PHexomutase_a/b/a-I"/>
</dbReference>
<dbReference type="InterPro" id="IPR016055">
    <property type="entry name" value="A-D-PHexomutase_a/b/a-I/II/III"/>
</dbReference>
<dbReference type="InterPro" id="IPR005845">
    <property type="entry name" value="A-D-PHexomutase_a/b/a-II"/>
</dbReference>
<dbReference type="InterPro" id="IPR005846">
    <property type="entry name" value="A-D-PHexomutase_a/b/a-III"/>
</dbReference>
<dbReference type="InterPro" id="IPR005843">
    <property type="entry name" value="A-D-PHexomutase_C"/>
</dbReference>
<dbReference type="InterPro" id="IPR036900">
    <property type="entry name" value="A-D-PHexomutase_C_sf"/>
</dbReference>
<dbReference type="InterPro" id="IPR016066">
    <property type="entry name" value="A-D-PHexomutase_CS"/>
</dbReference>
<dbReference type="InterPro" id="IPR005841">
    <property type="entry name" value="Alpha-D-phosphohexomutase_SF"/>
</dbReference>
<dbReference type="InterPro" id="IPR006352">
    <property type="entry name" value="GlmM_bact"/>
</dbReference>
<dbReference type="InterPro" id="IPR050060">
    <property type="entry name" value="Phosphoglucosamine_mutase"/>
</dbReference>
<dbReference type="NCBIfam" id="TIGR01455">
    <property type="entry name" value="glmM"/>
    <property type="match status" value="1"/>
</dbReference>
<dbReference type="NCBIfam" id="NF008139">
    <property type="entry name" value="PRK10887.1"/>
    <property type="match status" value="1"/>
</dbReference>
<dbReference type="PANTHER" id="PTHR42946:SF1">
    <property type="entry name" value="PHOSPHOGLUCOMUTASE (ALPHA-D-GLUCOSE-1,6-BISPHOSPHATE-DEPENDENT)"/>
    <property type="match status" value="1"/>
</dbReference>
<dbReference type="PANTHER" id="PTHR42946">
    <property type="entry name" value="PHOSPHOHEXOSE MUTASE"/>
    <property type="match status" value="1"/>
</dbReference>
<dbReference type="Pfam" id="PF02878">
    <property type="entry name" value="PGM_PMM_I"/>
    <property type="match status" value="1"/>
</dbReference>
<dbReference type="Pfam" id="PF02879">
    <property type="entry name" value="PGM_PMM_II"/>
    <property type="match status" value="1"/>
</dbReference>
<dbReference type="Pfam" id="PF02880">
    <property type="entry name" value="PGM_PMM_III"/>
    <property type="match status" value="1"/>
</dbReference>
<dbReference type="Pfam" id="PF00408">
    <property type="entry name" value="PGM_PMM_IV"/>
    <property type="match status" value="1"/>
</dbReference>
<dbReference type="PRINTS" id="PR00509">
    <property type="entry name" value="PGMPMM"/>
</dbReference>
<dbReference type="SUPFAM" id="SSF55957">
    <property type="entry name" value="Phosphoglucomutase, C-terminal domain"/>
    <property type="match status" value="1"/>
</dbReference>
<dbReference type="SUPFAM" id="SSF53738">
    <property type="entry name" value="Phosphoglucomutase, first 3 domains"/>
    <property type="match status" value="3"/>
</dbReference>
<dbReference type="PROSITE" id="PS00710">
    <property type="entry name" value="PGM_PMM"/>
    <property type="match status" value="1"/>
</dbReference>
<gene>
    <name evidence="1" type="primary">glmM</name>
    <name type="ordered locus">BWG_2878</name>
</gene>
<organism>
    <name type="scientific">Escherichia coli (strain K12 / MC4100 / BW2952)</name>
    <dbReference type="NCBI Taxonomy" id="595496"/>
    <lineage>
        <taxon>Bacteria</taxon>
        <taxon>Pseudomonadati</taxon>
        <taxon>Pseudomonadota</taxon>
        <taxon>Gammaproteobacteria</taxon>
        <taxon>Enterobacterales</taxon>
        <taxon>Enterobacteriaceae</taxon>
        <taxon>Escherichia</taxon>
    </lineage>
</organism>
<keyword id="KW-0413">Isomerase</keyword>
<keyword id="KW-0460">Magnesium</keyword>
<keyword id="KW-0479">Metal-binding</keyword>
<keyword id="KW-0597">Phosphoprotein</keyword>
<reference key="1">
    <citation type="journal article" date="2009" name="J. Bacteriol.">
        <title>Genomic sequencing reveals regulatory mutations and recombinational events in the widely used MC4100 lineage of Escherichia coli K-12.</title>
        <authorList>
            <person name="Ferenci T."/>
            <person name="Zhou Z."/>
            <person name="Betteridge T."/>
            <person name="Ren Y."/>
            <person name="Liu Y."/>
            <person name="Feng L."/>
            <person name="Reeves P.R."/>
            <person name="Wang L."/>
        </authorList>
    </citation>
    <scope>NUCLEOTIDE SEQUENCE [LARGE SCALE GENOMIC DNA]</scope>
    <source>
        <strain>K12 / MC4100 / BW2952</strain>
    </source>
</reference>
<evidence type="ECO:0000255" key="1">
    <source>
        <dbReference type="HAMAP-Rule" id="MF_01554"/>
    </source>
</evidence>
<comment type="function">
    <text evidence="1">Catalyzes the conversion of glucosamine-6-phosphate to glucosamine-1-phosphate.</text>
</comment>
<comment type="catalytic activity">
    <reaction evidence="1">
        <text>alpha-D-glucosamine 1-phosphate = D-glucosamine 6-phosphate</text>
        <dbReference type="Rhea" id="RHEA:23424"/>
        <dbReference type="ChEBI" id="CHEBI:58516"/>
        <dbReference type="ChEBI" id="CHEBI:58725"/>
        <dbReference type="EC" id="5.4.2.10"/>
    </reaction>
</comment>
<comment type="cofactor">
    <cofactor evidence="1">
        <name>Mg(2+)</name>
        <dbReference type="ChEBI" id="CHEBI:18420"/>
    </cofactor>
    <text evidence="1">Binds 1 Mg(2+) ion per subunit.</text>
</comment>
<comment type="PTM">
    <text evidence="1">Activated by phosphorylation.</text>
</comment>
<comment type="similarity">
    <text evidence="1">Belongs to the phosphohexose mutase family.</text>
</comment>
<proteinExistence type="inferred from homology"/>
<protein>
    <recommendedName>
        <fullName evidence="1">Phosphoglucosamine mutase</fullName>
        <ecNumber evidence="1">5.4.2.10</ecNumber>
    </recommendedName>
</protein>
<sequence length="445" mass="47544">MSNRKYFGTDGIRGRVGDAPITPDFVLKLGWAAGKVLARHGSRKIIIGKDTRISGYMLESALEAGLAAAGLSALFTGPMPTPAVAYLTRTFRAEAGIVISASHNPFYDNGIKFFSIDGTKLPDAVEEAIEAEMEKEISCVDSAELGKASRIVDAAGRYIEFCKATFPNELSLSELKIVVDCANGATYHIAPNVLRELGANVIAIGCEPNGVNINAEVGATDVRALQARVLAEKADLGIAFDGDGDRVIMVDHEGNKVDGDQIMYIIAREGLRQGQLRGGAVGTLMSNMGLELALKQLGIPFARAKVGDRYVLEKMQEKGWRIGAENSGHVILLDKTTTGDGIVAGLQVLAAMARNHMSLHDLCSGMKMFPQILVNVRYTAGSGDPLEHESVKAVTAEVEAALGNRGRVLLRKSGTEPLIRVMVEGEDEAQVTEFAHRIADAVKAV</sequence>